<dbReference type="EMBL" id="U10494">
    <property type="protein sequence ID" value="AAA52188.1"/>
    <property type="molecule type" value="mRNA"/>
</dbReference>
<dbReference type="PIR" id="S45700">
    <property type="entry name" value="S45700"/>
</dbReference>
<dbReference type="RefSeq" id="NP_001090205.1">
    <property type="nucleotide sequence ID" value="NM_001096736.1"/>
</dbReference>
<dbReference type="SMR" id="P43444"/>
<dbReference type="GeneID" id="779103"/>
<dbReference type="KEGG" id="xla:779103"/>
<dbReference type="AGR" id="Xenbase:XB-GENE-17339871"/>
<dbReference type="CTD" id="779103"/>
<dbReference type="Xenbase" id="XB-GENE-17339871">
    <property type="gene designation" value="gna11.L"/>
</dbReference>
<dbReference type="OMA" id="GNCISQM"/>
<dbReference type="OrthoDB" id="5817230at2759"/>
<dbReference type="Proteomes" id="UP000186698">
    <property type="component" value="Chromosome 1L"/>
</dbReference>
<dbReference type="Bgee" id="779103">
    <property type="expression patterns" value="Expressed in egg cell and 19 other cell types or tissues"/>
</dbReference>
<dbReference type="GO" id="GO:0005737">
    <property type="term" value="C:cytoplasm"/>
    <property type="evidence" value="ECO:0000318"/>
    <property type="project" value="GO_Central"/>
</dbReference>
<dbReference type="GO" id="GO:0005834">
    <property type="term" value="C:heterotrimeric G-protein complex"/>
    <property type="evidence" value="ECO:0000318"/>
    <property type="project" value="GO_Central"/>
</dbReference>
<dbReference type="GO" id="GO:0016020">
    <property type="term" value="C:membrane"/>
    <property type="evidence" value="ECO:0000250"/>
    <property type="project" value="AgBase"/>
</dbReference>
<dbReference type="GO" id="GO:0001750">
    <property type="term" value="C:photoreceptor outer segment"/>
    <property type="evidence" value="ECO:0000250"/>
    <property type="project" value="AgBase"/>
</dbReference>
<dbReference type="GO" id="GO:0045202">
    <property type="term" value="C:synapse"/>
    <property type="evidence" value="ECO:0007669"/>
    <property type="project" value="GOC"/>
</dbReference>
<dbReference type="GO" id="GO:0001664">
    <property type="term" value="F:G protein-coupled receptor binding"/>
    <property type="evidence" value="ECO:0000318"/>
    <property type="project" value="GO_Central"/>
</dbReference>
<dbReference type="GO" id="GO:0031683">
    <property type="term" value="F:G-protein beta/gamma-subunit complex binding"/>
    <property type="evidence" value="ECO:0000318"/>
    <property type="project" value="GO_Central"/>
</dbReference>
<dbReference type="GO" id="GO:0005525">
    <property type="term" value="F:GTP binding"/>
    <property type="evidence" value="ECO:0007669"/>
    <property type="project" value="UniProtKB-KW"/>
</dbReference>
<dbReference type="GO" id="GO:0003924">
    <property type="term" value="F:GTPase activity"/>
    <property type="evidence" value="ECO:0000318"/>
    <property type="project" value="GO_Central"/>
</dbReference>
<dbReference type="GO" id="GO:0046872">
    <property type="term" value="F:metal ion binding"/>
    <property type="evidence" value="ECO:0007669"/>
    <property type="project" value="UniProtKB-KW"/>
</dbReference>
<dbReference type="GO" id="GO:0001508">
    <property type="term" value="P:action potential"/>
    <property type="evidence" value="ECO:0000318"/>
    <property type="project" value="GO_Central"/>
</dbReference>
<dbReference type="GO" id="GO:0007188">
    <property type="term" value="P:adenylate cyclase-modulating G protein-coupled receptor signaling pathway"/>
    <property type="evidence" value="ECO:0000318"/>
    <property type="project" value="GO_Central"/>
</dbReference>
<dbReference type="GO" id="GO:0009649">
    <property type="term" value="P:entrainment of circadian clock"/>
    <property type="evidence" value="ECO:0000250"/>
    <property type="project" value="AgBase"/>
</dbReference>
<dbReference type="GO" id="GO:0007213">
    <property type="term" value="P:G protein-coupled acetylcholine receptor signaling pathway"/>
    <property type="evidence" value="ECO:0000250"/>
    <property type="project" value="AgBase"/>
</dbReference>
<dbReference type="GO" id="GO:0060158">
    <property type="term" value="P:phospholipase C-activating dopamine receptor signaling pathway"/>
    <property type="evidence" value="ECO:0000318"/>
    <property type="project" value="GO_Central"/>
</dbReference>
<dbReference type="GO" id="GO:0007603">
    <property type="term" value="P:phototransduction, visible light"/>
    <property type="evidence" value="ECO:0000250"/>
    <property type="project" value="AgBase"/>
</dbReference>
<dbReference type="CDD" id="cd00066">
    <property type="entry name" value="G-alpha"/>
    <property type="match status" value="1"/>
</dbReference>
<dbReference type="FunFam" id="3.40.50.300:FF:003977">
    <property type="entry name" value="Guanine nucleotide-binding protein G(q) subunit alpha"/>
    <property type="match status" value="1"/>
</dbReference>
<dbReference type="FunFam" id="1.10.400.10:FF:000002">
    <property type="entry name" value="guanine nucleotide-binding protein G(Q) subunit alpha"/>
    <property type="match status" value="1"/>
</dbReference>
<dbReference type="FunFam" id="3.40.50.300:FF:000692">
    <property type="entry name" value="Guanine nucleotide-binding protein subunit alpha"/>
    <property type="match status" value="1"/>
</dbReference>
<dbReference type="Gene3D" id="1.10.400.10">
    <property type="entry name" value="GI Alpha 1, domain 2-like"/>
    <property type="match status" value="1"/>
</dbReference>
<dbReference type="Gene3D" id="3.40.50.300">
    <property type="entry name" value="P-loop containing nucleotide triphosphate hydrolases"/>
    <property type="match status" value="1"/>
</dbReference>
<dbReference type="InterPro" id="IPR000654">
    <property type="entry name" value="Gprotein_alpha_Q"/>
</dbReference>
<dbReference type="InterPro" id="IPR001019">
    <property type="entry name" value="Gprotein_alpha_su"/>
</dbReference>
<dbReference type="InterPro" id="IPR011025">
    <property type="entry name" value="GproteinA_insert"/>
</dbReference>
<dbReference type="InterPro" id="IPR027417">
    <property type="entry name" value="P-loop_NTPase"/>
</dbReference>
<dbReference type="PANTHER" id="PTHR10218">
    <property type="entry name" value="GTP-BINDING PROTEIN ALPHA SUBUNIT"/>
    <property type="match status" value="1"/>
</dbReference>
<dbReference type="PANTHER" id="PTHR10218:SF328">
    <property type="entry name" value="GUANINE NUCLEOTIDE-BINDING PROTEIN SUBUNIT ALPHA-11"/>
    <property type="match status" value="1"/>
</dbReference>
<dbReference type="Pfam" id="PF00503">
    <property type="entry name" value="G-alpha"/>
    <property type="match status" value="1"/>
</dbReference>
<dbReference type="PRINTS" id="PR00318">
    <property type="entry name" value="GPROTEINA"/>
</dbReference>
<dbReference type="PRINTS" id="PR00442">
    <property type="entry name" value="GPROTEINAQ"/>
</dbReference>
<dbReference type="SMART" id="SM00275">
    <property type="entry name" value="G_alpha"/>
    <property type="match status" value="1"/>
</dbReference>
<dbReference type="SUPFAM" id="SSF52540">
    <property type="entry name" value="P-loop containing nucleoside triphosphate hydrolases"/>
    <property type="match status" value="1"/>
</dbReference>
<dbReference type="SUPFAM" id="SSF47895">
    <property type="entry name" value="Transducin (alpha subunit), insertion domain"/>
    <property type="match status" value="1"/>
</dbReference>
<dbReference type="PROSITE" id="PS51882">
    <property type="entry name" value="G_ALPHA"/>
    <property type="match status" value="1"/>
</dbReference>
<accession>P43444</accession>
<protein>
    <recommendedName>
        <fullName>Guanine nucleotide-binding protein subunit alpha-11</fullName>
        <shortName>G alpha-11</shortName>
        <shortName>G-protein subunit alpha-11</shortName>
    </recommendedName>
</protein>
<feature type="chain" id="PRO_0000203750" description="Guanine nucleotide-binding protein subunit alpha-11">
    <location>
        <begin position="1"/>
        <end position="359"/>
    </location>
</feature>
<feature type="domain" description="G-alpha" evidence="4">
    <location>
        <begin position="38"/>
        <end position="359"/>
    </location>
</feature>
<feature type="region of interest" description="G1 motif" evidence="4">
    <location>
        <begin position="41"/>
        <end position="54"/>
    </location>
</feature>
<feature type="region of interest" description="G2 motif" evidence="4">
    <location>
        <begin position="178"/>
        <end position="186"/>
    </location>
</feature>
<feature type="region of interest" description="G3 motif" evidence="4">
    <location>
        <begin position="201"/>
        <end position="210"/>
    </location>
</feature>
<feature type="region of interest" description="G4 motif" evidence="4">
    <location>
        <begin position="270"/>
        <end position="277"/>
    </location>
</feature>
<feature type="region of interest" description="G5 motif" evidence="4">
    <location>
        <begin position="329"/>
        <end position="334"/>
    </location>
</feature>
<feature type="binding site" evidence="2">
    <location>
        <begin position="46"/>
        <end position="53"/>
    </location>
    <ligand>
        <name>GTP</name>
        <dbReference type="ChEBI" id="CHEBI:37565"/>
    </ligand>
</feature>
<feature type="binding site" evidence="1">
    <location>
        <position position="53"/>
    </location>
    <ligand>
        <name>Mg(2+)</name>
        <dbReference type="ChEBI" id="CHEBI:18420"/>
    </ligand>
</feature>
<feature type="binding site" evidence="1">
    <location>
        <begin position="180"/>
        <end position="183"/>
    </location>
    <ligand>
        <name>GTP</name>
        <dbReference type="ChEBI" id="CHEBI:37565"/>
    </ligand>
</feature>
<feature type="binding site" evidence="1">
    <location>
        <position position="186"/>
    </location>
    <ligand>
        <name>Mg(2+)</name>
        <dbReference type="ChEBI" id="CHEBI:18420"/>
    </ligand>
</feature>
<feature type="binding site" evidence="1">
    <location>
        <begin position="274"/>
        <end position="277"/>
    </location>
    <ligand>
        <name>GTP</name>
        <dbReference type="ChEBI" id="CHEBI:37565"/>
    </ligand>
</feature>
<feature type="binding site" evidence="1">
    <location>
        <position position="331"/>
    </location>
    <ligand>
        <name>GTP</name>
        <dbReference type="ChEBI" id="CHEBI:37565"/>
    </ligand>
</feature>
<feature type="lipid moiety-binding region" description="S-palmitoyl cysteine" evidence="2">
    <location>
        <position position="9"/>
    </location>
</feature>
<feature type="lipid moiety-binding region" description="S-palmitoyl cysteine" evidence="2">
    <location>
        <position position="10"/>
    </location>
</feature>
<sequence>MTLDSTMACCLSEEVKESKRINAEIEKQLRRDKKDSRRELKLLLLGTGESGKSTFIKQMRIIHGSGYSEEDKKGFTKLVFQNIFTAMQSMIRAMETLKILYKYEQNKANAQVVREVDVEKVCTFEQPYVNAIKNLWSDPGIQECYDRRREYQLSDSTKYYLTDVDRISKPGYLPTQQDVLRVRVPTTGIIEYPFDLENIIFRMVDVGGQRSERRKWIHCFENVTSIMFLVALSEYDQVLVESDNENRMEESKALFRTIITYPWFQNSSVILFLNKKDLLEDKIMYSHLVDYFPEFDGPQRDAATAREFILKMFVDLNPDSDKIIYSHFTCATDTENIRFVFAAVKDTILQHNLKEYNLV</sequence>
<gene>
    <name type="primary">gna11</name>
</gene>
<keyword id="KW-1003">Cell membrane</keyword>
<keyword id="KW-0963">Cytoplasm</keyword>
<keyword id="KW-0342">GTP-binding</keyword>
<keyword id="KW-0378">Hydrolase</keyword>
<keyword id="KW-0449">Lipoprotein</keyword>
<keyword id="KW-0460">Magnesium</keyword>
<keyword id="KW-0472">Membrane</keyword>
<keyword id="KW-0479">Metal-binding</keyword>
<keyword id="KW-0547">Nucleotide-binding</keyword>
<keyword id="KW-0564">Palmitate</keyword>
<keyword id="KW-1185">Reference proteome</keyword>
<keyword id="KW-0807">Transducer</keyword>
<reference key="1">
    <citation type="journal article" date="1994" name="FEBS Lett.">
        <title>Neuromedin B receptor, expressed in Xenopus laevis oocytes, selectively couples to G alpha q and not G alpha 11.</title>
        <authorList>
            <person name="Shapira H."/>
            <person name="Way J."/>
            <person name="Lipinsky D."/>
            <person name="Oron Y."/>
            <person name="Battey J.F."/>
        </authorList>
    </citation>
    <scope>NUCLEOTIDE SEQUENCE [MRNA]</scope>
    <source>
        <tissue>Oocyte</tissue>
    </source>
</reference>
<reference key="2">
    <citation type="journal article" date="1994" name="FEBS Lett.">
        <authorList>
            <person name="Shapira H."/>
            <person name="Way J."/>
            <person name="Lipinsky D."/>
            <person name="Oron Y."/>
            <person name="Battey J.F."/>
        </authorList>
    </citation>
    <scope>ERRATUM OF PUBMED:8026589</scope>
</reference>
<organism>
    <name type="scientific">Xenopus laevis</name>
    <name type="common">African clawed frog</name>
    <dbReference type="NCBI Taxonomy" id="8355"/>
    <lineage>
        <taxon>Eukaryota</taxon>
        <taxon>Metazoa</taxon>
        <taxon>Chordata</taxon>
        <taxon>Craniata</taxon>
        <taxon>Vertebrata</taxon>
        <taxon>Euteleostomi</taxon>
        <taxon>Amphibia</taxon>
        <taxon>Batrachia</taxon>
        <taxon>Anura</taxon>
        <taxon>Pipoidea</taxon>
        <taxon>Pipidae</taxon>
        <taxon>Xenopodinae</taxon>
        <taxon>Xenopus</taxon>
        <taxon>Xenopus</taxon>
    </lineage>
</organism>
<evidence type="ECO:0000250" key="1">
    <source>
        <dbReference type="UniProtKB" id="P27600"/>
    </source>
</evidence>
<evidence type="ECO:0000250" key="2">
    <source>
        <dbReference type="UniProtKB" id="P29992"/>
    </source>
</evidence>
<evidence type="ECO:0000250" key="3">
    <source>
        <dbReference type="UniProtKB" id="P50148"/>
    </source>
</evidence>
<evidence type="ECO:0000255" key="4">
    <source>
        <dbReference type="PROSITE-ProRule" id="PRU01230"/>
    </source>
</evidence>
<evidence type="ECO:0000305" key="5"/>
<proteinExistence type="evidence at transcript level"/>
<name>GNA11_XENLA</name>
<comment type="function">
    <text evidence="2">Guanine nucleotide-binding proteins (G proteins) function as transducers downstream of G protein-coupled receptors (GPCRs) in numerous signaling cascades. The alpha chain contains the guanine nucleotide binding site and alternates between an active, GTP-bound state and an inactive, GDP-bound state. Signaling by an activated GPCR promotes GDP release and GTP binding. The alpha subunit has a low GTPase activity that converts bound GTP to GDP, thereby terminating the signal. Both GDP release and GTP hydrolysis are modulated by numerous regulatory proteins. Signaling is mediated via phospholipase C-beta-dependent inositol lipid hydrolysis for signal propagation: activates phospholipase C-beta: following GPCR activation, GNA11 activates PLC-beta (PLCB1, PLCB2, PLCB3 or PLCB4), leading to production of diacylglycerol (DAG) and inositol 1,4,5-trisphosphate (IP3).</text>
</comment>
<comment type="catalytic activity">
    <reaction evidence="3">
        <text>GTP + H2O = GDP + phosphate + H(+)</text>
        <dbReference type="Rhea" id="RHEA:19669"/>
        <dbReference type="ChEBI" id="CHEBI:15377"/>
        <dbReference type="ChEBI" id="CHEBI:15378"/>
        <dbReference type="ChEBI" id="CHEBI:37565"/>
        <dbReference type="ChEBI" id="CHEBI:43474"/>
        <dbReference type="ChEBI" id="CHEBI:58189"/>
    </reaction>
    <physiologicalReaction direction="left-to-right" evidence="3">
        <dbReference type="Rhea" id="RHEA:19670"/>
    </physiologicalReaction>
</comment>
<comment type="subunit">
    <text evidence="2">G proteins are composed of 3 units; alpha, beta and gamma. The alpha chain contains the guanine nucleotide binding site.</text>
</comment>
<comment type="subcellular location">
    <subcellularLocation>
        <location evidence="2">Cell membrane</location>
        <topology evidence="2">Lipid-anchor</topology>
    </subcellularLocation>
    <subcellularLocation>
        <location evidence="2">Cytoplasm</location>
    </subcellularLocation>
</comment>
<comment type="similarity">
    <text evidence="5">Belongs to the G-alpha family. G(q) subfamily.</text>
</comment>